<protein>
    <recommendedName>
        <fullName>Non-structural protein NS-S</fullName>
        <shortName>NSs</shortName>
    </recommendedName>
</protein>
<accession>P22026</accession>
<reference key="1">
    <citation type="journal article" date="1990" name="J. Virol.">
        <title>Uukuniemi virus S RNA segment: ambisense coding strategy, packaging of complementary strands into virions, and homology to members of the genus Phlebovirus.</title>
        <authorList>
            <person name="Simons J.F."/>
            <person name="Hellman U."/>
            <person name="Pettersson R.F."/>
        </authorList>
    </citation>
    <scope>NUCLEOTIDE SEQUENCE [GENOMIC RNA]</scope>
</reference>
<reference key="2">
    <citation type="journal article" date="2017" name="MSphere">
        <title>Differential Antagonism of Human Innate Immune Responses by Tick-Borne Phlebovirus Nonstructural Proteins.</title>
        <authorList>
            <person name="Rezelj V.V."/>
            <person name="Li P."/>
            <person name="Chaudhary V."/>
            <person name="Elliott R.M."/>
            <person name="Jin D.Y."/>
            <person name="Brennan B."/>
        </authorList>
    </citation>
    <scope>SUBCELLULAR LOCATION</scope>
    <scope>FUNCTION</scope>
    <scope>INTERACTION WITH HOST MAVS</scope>
</reference>
<reference key="3">
    <citation type="journal article" date="2019" name="Nat. Microbiol.">
        <title>Severe fever with thrombocytopenia syndrome phlebovirus non-structural protein activates TPL2 signalling pathway for viral immunopathogenesis.</title>
        <authorList>
            <person name="Choi Y."/>
            <person name="Park S.J."/>
            <person name="Sun Y."/>
            <person name="Yoo J.S."/>
            <person name="Pudupakam R.S."/>
            <person name="Foo S.S."/>
            <person name="Shin W.J."/>
            <person name="Chen S.B."/>
            <person name="Tsichlis P.N."/>
            <person name="Lee W.J."/>
            <person name="Lee J.S."/>
            <person name="Li W."/>
            <person name="Brennan B."/>
            <person name="Choi Y.K."/>
            <person name="Jung J.U."/>
        </authorList>
    </citation>
    <scope>FUNCTION</scope>
</reference>
<proteinExistence type="evidence at protein level"/>
<organismHost>
    <name type="scientific">Homo sapiens</name>
    <name type="common">Human</name>
    <dbReference type="NCBI Taxonomy" id="9606"/>
</organismHost>
<organismHost>
    <name type="scientific">Ixodes ricinus</name>
    <name type="common">Common tick</name>
    <name type="synonym">Acarus ricinus</name>
    <dbReference type="NCBI Taxonomy" id="34613"/>
</organismHost>
<organism>
    <name type="scientific">Uukuniemi virus (strain S23)</name>
    <name type="common">UUKV</name>
    <dbReference type="NCBI Taxonomy" id="487099"/>
    <lineage>
        <taxon>Viruses</taxon>
        <taxon>Riboviria</taxon>
        <taxon>Orthornavirae</taxon>
        <taxon>Negarnaviricota</taxon>
        <taxon>Polyploviricotina</taxon>
        <taxon>Ellioviricetes</taxon>
        <taxon>Bunyavirales</taxon>
        <taxon>Phenuiviridae</taxon>
        <taxon>Phlebovirus</taxon>
        <taxon>Uukuniemi phlebovirus</taxon>
    </lineage>
</organism>
<sequence length="273" mass="32019">MSYFTIQNEDLPQGFTFRPHDKIYDSLWEMMDDGYFPSTIPLKTTINGVDMPSVGWLEVDEGLYDILIDGLDVLRPTDEEMIVSATGWPLEKNRALILNFFRNLRMDIIGTYTLQRSFITIMSIVLFGDQNPRLRRKKRSRVSLGKMLFDLALRMRSKIRRMKLTEVQVTGQNLVKDLCLLHILDLQKRLVTRGTIAEKRFFTAIEQAPCNYEPKRYGMKKKHMNFMFESDRKNLTVHPTLVNLEEHWITFESARERLLDTTFTKDWPVVGSL</sequence>
<evidence type="ECO:0000269" key="1">
    <source>
    </source>
</evidence>
<evidence type="ECO:0000269" key="2">
    <source>
    </source>
</evidence>
<evidence type="ECO:0000305" key="3"/>
<keyword id="KW-1035">Host cytoplasm</keyword>
<keyword id="KW-0945">Host-virus interaction</keyword>
<keyword id="KW-1090">Inhibition of host innate immune response by virus</keyword>
<keyword id="KW-1097">Inhibition of host MAVS by virus</keyword>
<keyword id="KW-1113">Inhibition of host RLR pathway by virus</keyword>
<keyword id="KW-1185">Reference proteome</keyword>
<keyword id="KW-0899">Viral immunoevasion</keyword>
<comment type="function">
    <text evidence="1 2">Acts as a weak IFN antagonist.</text>
</comment>
<comment type="subunit">
    <text evidence="1">Interacts with host MAVS; this interaction weakly inhibits the host IFN response.</text>
</comment>
<comment type="subcellular location">
    <subcellularLocation>
        <location evidence="1">Host cytoplasm</location>
    </subcellularLocation>
</comment>
<comment type="similarity">
    <text evidence="3">Belongs to the phlebovirus NS-S protein family.</text>
</comment>
<dbReference type="EMBL" id="M33551">
    <property type="protein sequence ID" value="AAA47959.1"/>
    <property type="molecule type" value="Genomic_RNA"/>
</dbReference>
<dbReference type="PIR" id="B33559">
    <property type="entry name" value="MNVUUU"/>
</dbReference>
<dbReference type="KEGG" id="vg:2654010"/>
<dbReference type="Proteomes" id="UP000008595">
    <property type="component" value="Genome"/>
</dbReference>
<dbReference type="GO" id="GO:0030430">
    <property type="term" value="C:host cell cytoplasm"/>
    <property type="evidence" value="ECO:0007669"/>
    <property type="project" value="UniProtKB-SubCell"/>
</dbReference>
<dbReference type="GO" id="GO:0039545">
    <property type="term" value="P:symbiont-mediated suppression of host cytoplasmic pattern recognition receptor signaling pathway via inhibition of MAVS activity"/>
    <property type="evidence" value="ECO:0007669"/>
    <property type="project" value="UniProtKB-KW"/>
</dbReference>
<gene>
    <name type="primary">NSS</name>
</gene>
<feature type="chain" id="PRO_0000221982" description="Non-structural protein NS-S">
    <location>
        <begin position="1"/>
        <end position="273"/>
    </location>
</feature>
<name>NSS_UUKS</name>